<sequence>MSNIRALGAYRNALRATRVAFKTDLPVLMAARTQIKQGFVDNKDLADQEQQHEAIDKMNEVSQFLIKNIVQGEKQEGDKYFLNFHERTELGDNETIKQSKAEMGSLAGARAKKYSNIKK</sequence>
<protein>
    <recommendedName>
        <fullName>Mitochondrial zinc maintenance protein 1, mitochondrial</fullName>
    </recommendedName>
</protein>
<comment type="function">
    <text evidence="1">Assembly factor required for Rieske Fe-S protein RIP1 incorporation into the cytochrome b-c1 (CIII) complex. Functions as a chaperone, binding to this subunit within the mitochondrial matrix and stabilizing it prior to its translocation and insertion into the late CIII dimeric intermediate within the mitochondrial inner membrane. Modulates the mitochondrial matrix zinc pool (By similarity).</text>
</comment>
<comment type="subunit">
    <text evidence="1">Interacts with RIP1.</text>
</comment>
<comment type="subcellular location">
    <subcellularLocation>
        <location evidence="1">Mitochondrion matrix</location>
    </subcellularLocation>
</comment>
<comment type="similarity">
    <text evidence="3">Belongs to the complex I LYR family. MZM1 subfamily.</text>
</comment>
<evidence type="ECO:0000250" key="1"/>
<evidence type="ECO:0000255" key="2"/>
<evidence type="ECO:0000305" key="3"/>
<name>MZM1_DEBHA</name>
<gene>
    <name type="primary">MZM1</name>
    <name type="ordered locus">DEHA2E05214g</name>
</gene>
<dbReference type="EMBL" id="CR382137">
    <property type="protein sequence ID" value="CAG87773.1"/>
    <property type="molecule type" value="Genomic_DNA"/>
</dbReference>
<dbReference type="RefSeq" id="XP_459546.1">
    <property type="nucleotide sequence ID" value="XM_459546.1"/>
</dbReference>
<dbReference type="SMR" id="Q6BQH4"/>
<dbReference type="FunCoup" id="Q6BQH4">
    <property type="interactions" value="19"/>
</dbReference>
<dbReference type="STRING" id="284592.Q6BQH4"/>
<dbReference type="GeneID" id="2902285"/>
<dbReference type="KEGG" id="dha:DEHA2E05214g"/>
<dbReference type="VEuPathDB" id="FungiDB:DEHA2E05214g"/>
<dbReference type="eggNOG" id="ENOG502S6EF">
    <property type="taxonomic scope" value="Eukaryota"/>
</dbReference>
<dbReference type="HOGENOM" id="CLU_147114_2_2_1"/>
<dbReference type="InParanoid" id="Q6BQH4"/>
<dbReference type="OMA" id="KYKLRIH"/>
<dbReference type="OrthoDB" id="529194at2759"/>
<dbReference type="Proteomes" id="UP000000599">
    <property type="component" value="Chromosome E"/>
</dbReference>
<dbReference type="GO" id="GO:0005759">
    <property type="term" value="C:mitochondrial matrix"/>
    <property type="evidence" value="ECO:0007669"/>
    <property type="project" value="UniProtKB-SubCell"/>
</dbReference>
<dbReference type="GO" id="GO:0044183">
    <property type="term" value="F:protein folding chaperone"/>
    <property type="evidence" value="ECO:0007669"/>
    <property type="project" value="TreeGrafter"/>
</dbReference>
<dbReference type="GO" id="GO:0034551">
    <property type="term" value="P:mitochondrial respiratory chain complex III assembly"/>
    <property type="evidence" value="ECO:0007669"/>
    <property type="project" value="InterPro"/>
</dbReference>
<dbReference type="CDD" id="cd20267">
    <property type="entry name" value="Complex1_LYR_LYRM7"/>
    <property type="match status" value="1"/>
</dbReference>
<dbReference type="InterPro" id="IPR045298">
    <property type="entry name" value="Complex1_LYR_LYRM7"/>
</dbReference>
<dbReference type="InterPro" id="IPR050435">
    <property type="entry name" value="MZM1/LYRM7"/>
</dbReference>
<dbReference type="PANTHER" id="PTHR46749">
    <property type="entry name" value="COMPLEX III ASSEMBLY FACTOR LYRM7"/>
    <property type="match status" value="1"/>
</dbReference>
<dbReference type="PANTHER" id="PTHR46749:SF1">
    <property type="entry name" value="COMPLEX III ASSEMBLY FACTOR LYRM7"/>
    <property type="match status" value="1"/>
</dbReference>
<feature type="transit peptide" description="Mitochondrion" evidence="2">
    <location>
        <begin position="1"/>
        <end position="14"/>
    </location>
</feature>
<feature type="chain" id="PRO_0000405493" description="Mitochondrial zinc maintenance protein 1, mitochondrial">
    <location>
        <begin position="15"/>
        <end position="119"/>
    </location>
</feature>
<accession>Q6BQH4</accession>
<reference key="1">
    <citation type="journal article" date="2004" name="Nature">
        <title>Genome evolution in yeasts.</title>
        <authorList>
            <person name="Dujon B."/>
            <person name="Sherman D."/>
            <person name="Fischer G."/>
            <person name="Durrens P."/>
            <person name="Casaregola S."/>
            <person name="Lafontaine I."/>
            <person name="de Montigny J."/>
            <person name="Marck C."/>
            <person name="Neuveglise C."/>
            <person name="Talla E."/>
            <person name="Goffard N."/>
            <person name="Frangeul L."/>
            <person name="Aigle M."/>
            <person name="Anthouard V."/>
            <person name="Babour A."/>
            <person name="Barbe V."/>
            <person name="Barnay S."/>
            <person name="Blanchin S."/>
            <person name="Beckerich J.-M."/>
            <person name="Beyne E."/>
            <person name="Bleykasten C."/>
            <person name="Boisrame A."/>
            <person name="Boyer J."/>
            <person name="Cattolico L."/>
            <person name="Confanioleri F."/>
            <person name="de Daruvar A."/>
            <person name="Despons L."/>
            <person name="Fabre E."/>
            <person name="Fairhead C."/>
            <person name="Ferry-Dumazet H."/>
            <person name="Groppi A."/>
            <person name="Hantraye F."/>
            <person name="Hennequin C."/>
            <person name="Jauniaux N."/>
            <person name="Joyet P."/>
            <person name="Kachouri R."/>
            <person name="Kerrest A."/>
            <person name="Koszul R."/>
            <person name="Lemaire M."/>
            <person name="Lesur I."/>
            <person name="Ma L."/>
            <person name="Muller H."/>
            <person name="Nicaud J.-M."/>
            <person name="Nikolski M."/>
            <person name="Oztas S."/>
            <person name="Ozier-Kalogeropoulos O."/>
            <person name="Pellenz S."/>
            <person name="Potier S."/>
            <person name="Richard G.-F."/>
            <person name="Straub M.-L."/>
            <person name="Suleau A."/>
            <person name="Swennen D."/>
            <person name="Tekaia F."/>
            <person name="Wesolowski-Louvel M."/>
            <person name="Westhof E."/>
            <person name="Wirth B."/>
            <person name="Zeniou-Meyer M."/>
            <person name="Zivanovic Y."/>
            <person name="Bolotin-Fukuhara M."/>
            <person name="Thierry A."/>
            <person name="Bouchier C."/>
            <person name="Caudron B."/>
            <person name="Scarpelli C."/>
            <person name="Gaillardin C."/>
            <person name="Weissenbach J."/>
            <person name="Wincker P."/>
            <person name="Souciet J.-L."/>
        </authorList>
    </citation>
    <scope>NUCLEOTIDE SEQUENCE [LARGE SCALE GENOMIC DNA]</scope>
    <source>
        <strain>ATCC 36239 / CBS 767 / BCRC 21394 / JCM 1990 / NBRC 0083 / IGC 2968</strain>
    </source>
</reference>
<keyword id="KW-0143">Chaperone</keyword>
<keyword id="KW-0496">Mitochondrion</keyword>
<keyword id="KW-1185">Reference proteome</keyword>
<keyword id="KW-0809">Transit peptide</keyword>
<proteinExistence type="inferred from homology"/>
<organism>
    <name type="scientific">Debaryomyces hansenii (strain ATCC 36239 / CBS 767 / BCRC 21394 / JCM 1990 / NBRC 0083 / IGC 2968)</name>
    <name type="common">Yeast</name>
    <name type="synonym">Torulaspora hansenii</name>
    <dbReference type="NCBI Taxonomy" id="284592"/>
    <lineage>
        <taxon>Eukaryota</taxon>
        <taxon>Fungi</taxon>
        <taxon>Dikarya</taxon>
        <taxon>Ascomycota</taxon>
        <taxon>Saccharomycotina</taxon>
        <taxon>Pichiomycetes</taxon>
        <taxon>Debaryomycetaceae</taxon>
        <taxon>Debaryomyces</taxon>
    </lineage>
</organism>